<organism>
    <name type="scientific">Salmonella arizonae (strain ATCC BAA-731 / CDC346-86 / RSK2980)</name>
    <dbReference type="NCBI Taxonomy" id="41514"/>
    <lineage>
        <taxon>Bacteria</taxon>
        <taxon>Pseudomonadati</taxon>
        <taxon>Pseudomonadota</taxon>
        <taxon>Gammaproteobacteria</taxon>
        <taxon>Enterobacterales</taxon>
        <taxon>Enterobacteriaceae</taxon>
        <taxon>Salmonella</taxon>
    </lineage>
</organism>
<protein>
    <recommendedName>
        <fullName evidence="1">PhoP/PhoQ regulator MgrB</fullName>
    </recommendedName>
</protein>
<accession>A9MNI4</accession>
<name>MGRB_SALAR</name>
<feature type="chain" id="PRO_0000330675" description="PhoP/PhoQ regulator MgrB">
    <location>
        <begin position="1"/>
        <end position="47"/>
    </location>
</feature>
<feature type="transmembrane region" description="Helical" evidence="1">
    <location>
        <begin position="6"/>
        <end position="26"/>
    </location>
</feature>
<reference key="1">
    <citation type="submission" date="2007-11" db="EMBL/GenBank/DDBJ databases">
        <authorList>
            <consortium name="The Salmonella enterica serovar Arizonae Genome Sequencing Project"/>
            <person name="McClelland M."/>
            <person name="Sanderson E.K."/>
            <person name="Porwollik S."/>
            <person name="Spieth J."/>
            <person name="Clifton W.S."/>
            <person name="Fulton R."/>
            <person name="Chunyan W."/>
            <person name="Wollam A."/>
            <person name="Shah N."/>
            <person name="Pepin K."/>
            <person name="Bhonagiri V."/>
            <person name="Nash W."/>
            <person name="Johnson M."/>
            <person name="Thiruvilangam P."/>
            <person name="Wilson R."/>
        </authorList>
    </citation>
    <scope>NUCLEOTIDE SEQUENCE [LARGE SCALE GENOMIC DNA]</scope>
    <source>
        <strain>ATCC BAA-731 / CDC346-86 / RSK2980</strain>
    </source>
</reference>
<proteinExistence type="inferred from homology"/>
<sequence length="47" mass="5520">MKKFRWVVLGIVVVVCLLLWAQVFNIMCDQDVQFFSGICAINKFIPW</sequence>
<dbReference type="EMBL" id="CP000880">
    <property type="protein sequence ID" value="ABX21007.1"/>
    <property type="molecule type" value="Genomic_DNA"/>
</dbReference>
<dbReference type="STRING" id="41514.SARI_01101"/>
<dbReference type="KEGG" id="ses:SARI_01101"/>
<dbReference type="HOGENOM" id="CLU_208030_1_0_6"/>
<dbReference type="Proteomes" id="UP000002084">
    <property type="component" value="Chromosome"/>
</dbReference>
<dbReference type="GO" id="GO:0005886">
    <property type="term" value="C:plasma membrane"/>
    <property type="evidence" value="ECO:0007669"/>
    <property type="project" value="UniProtKB-SubCell"/>
</dbReference>
<dbReference type="GO" id="GO:0070298">
    <property type="term" value="P:negative regulation of phosphorelay signal transduction system"/>
    <property type="evidence" value="ECO:0007669"/>
    <property type="project" value="UniProtKB-UniRule"/>
</dbReference>
<dbReference type="HAMAP" id="MF_01596">
    <property type="entry name" value="MgrB"/>
    <property type="match status" value="1"/>
</dbReference>
<dbReference type="InterPro" id="IPR020907">
    <property type="entry name" value="MgrB"/>
</dbReference>
<dbReference type="NCBIfam" id="NF007635">
    <property type="entry name" value="PRK10299.1"/>
    <property type="match status" value="1"/>
</dbReference>
<dbReference type="Pfam" id="PF13998">
    <property type="entry name" value="MgrB"/>
    <property type="match status" value="1"/>
</dbReference>
<comment type="function">
    <text evidence="1">PhoP-regulated transcription is redox-sensitive, being activated when the periplasm becomes more reducing. MgrB acts between DsbA/DsbB and PhoP/PhoQ in this pathway. Represses PhoP/PhoQ signaling, possibly by binding to the periplasmic domain of PhoQ, altering its activity and that of downstream effector PhoP.</text>
</comment>
<comment type="subunit">
    <text evidence="1">May form homooligomers. Probably interacts with the periplasmic domain of PhoQ.</text>
</comment>
<comment type="subcellular location">
    <subcellularLocation>
        <location evidence="1">Cell inner membrane</location>
        <topology evidence="1">Single-pass membrane protein</topology>
    </subcellularLocation>
</comment>
<comment type="similarity">
    <text evidence="1">Belongs to the MgrB family.</text>
</comment>
<keyword id="KW-0997">Cell inner membrane</keyword>
<keyword id="KW-1003">Cell membrane</keyword>
<keyword id="KW-0472">Membrane</keyword>
<keyword id="KW-1185">Reference proteome</keyword>
<keyword id="KW-0812">Transmembrane</keyword>
<keyword id="KW-1133">Transmembrane helix</keyword>
<gene>
    <name evidence="1" type="primary">mgrB</name>
    <name type="ordered locus">SARI_01101</name>
</gene>
<evidence type="ECO:0000255" key="1">
    <source>
        <dbReference type="HAMAP-Rule" id="MF_01596"/>
    </source>
</evidence>